<keyword id="KW-0028">Amino-acid biosynthesis</keyword>
<keyword id="KW-0057">Aromatic amino acid biosynthesis</keyword>
<keyword id="KW-0210">Decarboxylase</keyword>
<keyword id="KW-0456">Lyase</keyword>
<keyword id="KW-0822">Tryptophan biosynthesis</keyword>
<organism>
    <name type="scientific">Mycobacterium bovis (strain BCG / Pasteur 1173P2)</name>
    <dbReference type="NCBI Taxonomy" id="410289"/>
    <lineage>
        <taxon>Bacteria</taxon>
        <taxon>Bacillati</taxon>
        <taxon>Actinomycetota</taxon>
        <taxon>Actinomycetes</taxon>
        <taxon>Mycobacteriales</taxon>
        <taxon>Mycobacteriaceae</taxon>
        <taxon>Mycobacterium</taxon>
        <taxon>Mycobacterium tuberculosis complex</taxon>
    </lineage>
</organism>
<reference key="1">
    <citation type="journal article" date="2007" name="Proc. Natl. Acad. Sci. U.S.A.">
        <title>Genome plasticity of BCG and impact on vaccine efficacy.</title>
        <authorList>
            <person name="Brosch R."/>
            <person name="Gordon S.V."/>
            <person name="Garnier T."/>
            <person name="Eiglmeier K."/>
            <person name="Frigui W."/>
            <person name="Valenti P."/>
            <person name="Dos Santos S."/>
            <person name="Duthoy S."/>
            <person name="Lacroix C."/>
            <person name="Garcia-Pelayo C."/>
            <person name="Inwald J.K."/>
            <person name="Golby P."/>
            <person name="Garcia J.N."/>
            <person name="Hewinson R.G."/>
            <person name="Behr M.A."/>
            <person name="Quail M.A."/>
            <person name="Churcher C."/>
            <person name="Barrell B.G."/>
            <person name="Parkhill J."/>
            <person name="Cole S.T."/>
        </authorList>
    </citation>
    <scope>NUCLEOTIDE SEQUENCE [LARGE SCALE GENOMIC DNA]</scope>
    <source>
        <strain>BCG / Pasteur 1173P2</strain>
    </source>
</reference>
<proteinExistence type="inferred from homology"/>
<feature type="chain" id="PRO_1000018499" description="Indole-3-glycerol phosphate synthase">
    <location>
        <begin position="1"/>
        <end position="272"/>
    </location>
</feature>
<protein>
    <recommendedName>
        <fullName evidence="1">Indole-3-glycerol phosphate synthase</fullName>
        <shortName evidence="1">IGPS</shortName>
        <ecNumber evidence="1">4.1.1.48</ecNumber>
    </recommendedName>
</protein>
<dbReference type="EC" id="4.1.1.48" evidence="1"/>
<dbReference type="EMBL" id="AM408590">
    <property type="protein sequence ID" value="CAL71636.1"/>
    <property type="molecule type" value="Genomic_DNA"/>
</dbReference>
<dbReference type="RefSeq" id="WP_003407990.1">
    <property type="nucleotide sequence ID" value="NC_008769.1"/>
</dbReference>
<dbReference type="SMR" id="A1KJ27"/>
<dbReference type="KEGG" id="mbb:BCG_1649"/>
<dbReference type="HOGENOM" id="CLU_034247_0_0_11"/>
<dbReference type="BRENDA" id="4.1.1.48">
    <property type="organism ID" value="10096"/>
</dbReference>
<dbReference type="UniPathway" id="UPA00035">
    <property type="reaction ID" value="UER00043"/>
</dbReference>
<dbReference type="Proteomes" id="UP000001472">
    <property type="component" value="Chromosome"/>
</dbReference>
<dbReference type="GO" id="GO:0004425">
    <property type="term" value="F:indole-3-glycerol-phosphate synthase activity"/>
    <property type="evidence" value="ECO:0007669"/>
    <property type="project" value="UniProtKB-UniRule"/>
</dbReference>
<dbReference type="GO" id="GO:0004640">
    <property type="term" value="F:phosphoribosylanthranilate isomerase activity"/>
    <property type="evidence" value="ECO:0007669"/>
    <property type="project" value="TreeGrafter"/>
</dbReference>
<dbReference type="GO" id="GO:0000162">
    <property type="term" value="P:L-tryptophan biosynthetic process"/>
    <property type="evidence" value="ECO:0007669"/>
    <property type="project" value="UniProtKB-UniRule"/>
</dbReference>
<dbReference type="CDD" id="cd00331">
    <property type="entry name" value="IGPS"/>
    <property type="match status" value="1"/>
</dbReference>
<dbReference type="FunFam" id="3.20.20.70:FF:000024">
    <property type="entry name" value="Indole-3-glycerol phosphate synthase"/>
    <property type="match status" value="1"/>
</dbReference>
<dbReference type="Gene3D" id="3.20.20.70">
    <property type="entry name" value="Aldolase class I"/>
    <property type="match status" value="1"/>
</dbReference>
<dbReference type="HAMAP" id="MF_00134_B">
    <property type="entry name" value="IGPS_B"/>
    <property type="match status" value="1"/>
</dbReference>
<dbReference type="InterPro" id="IPR013785">
    <property type="entry name" value="Aldolase_TIM"/>
</dbReference>
<dbReference type="InterPro" id="IPR045186">
    <property type="entry name" value="Indole-3-glycerol_P_synth"/>
</dbReference>
<dbReference type="InterPro" id="IPR013798">
    <property type="entry name" value="Indole-3-glycerol_P_synth_dom"/>
</dbReference>
<dbReference type="InterPro" id="IPR001468">
    <property type="entry name" value="Indole-3-GlycerolPSynthase_CS"/>
</dbReference>
<dbReference type="InterPro" id="IPR011060">
    <property type="entry name" value="RibuloseP-bd_barrel"/>
</dbReference>
<dbReference type="NCBIfam" id="NF001369">
    <property type="entry name" value="PRK00278.1-1"/>
    <property type="match status" value="1"/>
</dbReference>
<dbReference type="NCBIfam" id="NF001377">
    <property type="entry name" value="PRK00278.2-4"/>
    <property type="match status" value="1"/>
</dbReference>
<dbReference type="PANTHER" id="PTHR22854:SF2">
    <property type="entry name" value="INDOLE-3-GLYCEROL-PHOSPHATE SYNTHASE"/>
    <property type="match status" value="1"/>
</dbReference>
<dbReference type="PANTHER" id="PTHR22854">
    <property type="entry name" value="TRYPTOPHAN BIOSYNTHESIS PROTEIN"/>
    <property type="match status" value="1"/>
</dbReference>
<dbReference type="Pfam" id="PF00218">
    <property type="entry name" value="IGPS"/>
    <property type="match status" value="1"/>
</dbReference>
<dbReference type="SUPFAM" id="SSF51366">
    <property type="entry name" value="Ribulose-phoshate binding barrel"/>
    <property type="match status" value="1"/>
</dbReference>
<dbReference type="PROSITE" id="PS00614">
    <property type="entry name" value="IGPS"/>
    <property type="match status" value="1"/>
</dbReference>
<sequence length="272" mass="28023">MSPATVLDSILEGVRADVAAREASVSLSEIKAAAAAAPPPLDVMAALREPGIGVIAEVKRASPSAGALATIADPAKLAQAYQDGGARIVSVVTEQRRFQGSLDDLDAVRASVSIPVLRKDFVVQPYQIHEARAHGADMLLLIVAALEQSVLVSMLDRTESLGMTALVEVHTEQEADRALKAGAKVIGVNARDLMTLDVDRDCFARIAPGLPSSVIRIAESGVRGTADLLAYAGAGADAVLVGEGLVTSGDPRAAVADLVTAGTHPSCPKPAR</sequence>
<gene>
    <name evidence="1" type="primary">trpC</name>
    <name type="ordered locus">BCG_1649</name>
</gene>
<name>TRPC_MYCBP</name>
<accession>A1KJ27</accession>
<evidence type="ECO:0000255" key="1">
    <source>
        <dbReference type="HAMAP-Rule" id="MF_00134"/>
    </source>
</evidence>
<comment type="catalytic activity">
    <reaction evidence="1">
        <text>1-(2-carboxyphenylamino)-1-deoxy-D-ribulose 5-phosphate + H(+) = (1S,2R)-1-C-(indol-3-yl)glycerol 3-phosphate + CO2 + H2O</text>
        <dbReference type="Rhea" id="RHEA:23476"/>
        <dbReference type="ChEBI" id="CHEBI:15377"/>
        <dbReference type="ChEBI" id="CHEBI:15378"/>
        <dbReference type="ChEBI" id="CHEBI:16526"/>
        <dbReference type="ChEBI" id="CHEBI:58613"/>
        <dbReference type="ChEBI" id="CHEBI:58866"/>
        <dbReference type="EC" id="4.1.1.48"/>
    </reaction>
</comment>
<comment type="pathway">
    <text evidence="1">Amino-acid biosynthesis; L-tryptophan biosynthesis; L-tryptophan from chorismate: step 4/5.</text>
</comment>
<comment type="similarity">
    <text evidence="1">Belongs to the TrpC family.</text>
</comment>